<proteinExistence type="inferred from homology"/>
<evidence type="ECO:0000250" key="1"/>
<evidence type="ECO:0000255" key="2"/>
<evidence type="ECO:0000255" key="3">
    <source>
        <dbReference type="PROSITE-ProRule" id="PRU01058"/>
    </source>
</evidence>
<dbReference type="EMBL" id="CU928178">
    <property type="protein sequence ID" value="CAR28743.1"/>
    <property type="molecule type" value="Genomic_DNA"/>
</dbReference>
<dbReference type="RefSeq" id="XP_002497676.1">
    <property type="nucleotide sequence ID" value="XM_002497631.1"/>
</dbReference>
<dbReference type="FunCoup" id="C5DY82">
    <property type="interactions" value="107"/>
</dbReference>
<dbReference type="STRING" id="559307.C5DY82"/>
<dbReference type="GeneID" id="8205442"/>
<dbReference type="KEGG" id="zro:ZYRO0F11000g"/>
<dbReference type="HOGENOM" id="CLU_025792_1_0_1"/>
<dbReference type="InParanoid" id="C5DY82"/>
<dbReference type="Proteomes" id="UP000008536">
    <property type="component" value="Chromosome F"/>
</dbReference>
<dbReference type="GO" id="GO:0005739">
    <property type="term" value="C:mitochondrion"/>
    <property type="evidence" value="ECO:0007669"/>
    <property type="project" value="UniProtKB-SubCell"/>
</dbReference>
<dbReference type="GO" id="GO:0005525">
    <property type="term" value="F:GTP binding"/>
    <property type="evidence" value="ECO:0007669"/>
    <property type="project" value="InterPro"/>
</dbReference>
<dbReference type="Gene3D" id="3.40.50.300">
    <property type="entry name" value="P-loop containing nucleotide triphosphate hydrolases"/>
    <property type="match status" value="1"/>
</dbReference>
<dbReference type="InterPro" id="IPR030378">
    <property type="entry name" value="G_CP_dom"/>
</dbReference>
<dbReference type="InterPro" id="IPR050896">
    <property type="entry name" value="Mito_lipid_metab_GTPase"/>
</dbReference>
<dbReference type="InterPro" id="IPR027417">
    <property type="entry name" value="P-loop_NTPase"/>
</dbReference>
<dbReference type="PANTHER" id="PTHR46434">
    <property type="entry name" value="GENETIC INTERACTOR OF PROHIBITINS 3, MITOCHONDRIAL"/>
    <property type="match status" value="1"/>
</dbReference>
<dbReference type="PANTHER" id="PTHR46434:SF1">
    <property type="entry name" value="GENETIC INTERACTOR OF PROHIBITINS 3, MITOCHONDRIAL"/>
    <property type="match status" value="1"/>
</dbReference>
<dbReference type="SUPFAM" id="SSF52540">
    <property type="entry name" value="P-loop containing nucleoside triphosphate hydrolases"/>
    <property type="match status" value="1"/>
</dbReference>
<dbReference type="PROSITE" id="PS51721">
    <property type="entry name" value="G_CP"/>
    <property type="match status" value="1"/>
</dbReference>
<sequence length="565" mass="65577">MLKEQFLNAFDHPSRCLFMTLRFRRWFSTTLARLINCNSCGIKLQNENPKTIGYYIKPKKPTVNKLQSLEDVKYLLFSQDLQHVKEQQDVGSLEELNETMESPLICKRCNDALHRNQYDLKEFGRYTITDVLEKIPRGSNILHVVPLPEFPFHFEKSLLEVPHFNTSLLLTKGDQLANDKNTLQRRSLVFFKDFLKYQLGIISNKTVAVSGLKNWNIQSAYAAMNANSYLVGDANVGKSTLINSVMQRYLGYKIHTDRKGQIVTNEPSVKDLKNIKHFFKNQFAGVSHIPNMTRNLQGYRVGDKFIYDLPGFTTNINGAYYEDIIQKDWLERTRKTEKFNTKKLKKQRYISVKGNEKGNCYTVGGIFFWQPPAGTVNQVVSYIPGEGREFADINRGLEVFRACQDDAHPLAKFCGVHPQICQRENYVRHVIPPFQGSIEVVLKDIGYFTIKTTGRYQFKGLHEFWVPRGIDVLVREPLESLISEGSWRHTESKGRVPACPKDRPIVSSTYIVDPEESDLLGKMKEMYLERTSNDISSRRFLYDDPLEVVSKLHEERPNLYWYYRW</sequence>
<accession>C5DY82</accession>
<reference key="1">
    <citation type="journal article" date="2009" name="Genome Res.">
        <title>Comparative genomics of protoploid Saccharomycetaceae.</title>
        <authorList>
            <consortium name="The Genolevures Consortium"/>
            <person name="Souciet J.-L."/>
            <person name="Dujon B."/>
            <person name="Gaillardin C."/>
            <person name="Johnston M."/>
            <person name="Baret P.V."/>
            <person name="Cliften P."/>
            <person name="Sherman D.J."/>
            <person name="Weissenbach J."/>
            <person name="Westhof E."/>
            <person name="Wincker P."/>
            <person name="Jubin C."/>
            <person name="Poulain J."/>
            <person name="Barbe V."/>
            <person name="Segurens B."/>
            <person name="Artiguenave F."/>
            <person name="Anthouard V."/>
            <person name="Vacherie B."/>
            <person name="Val M.-E."/>
            <person name="Fulton R.S."/>
            <person name="Minx P."/>
            <person name="Wilson R."/>
            <person name="Durrens P."/>
            <person name="Jean G."/>
            <person name="Marck C."/>
            <person name="Martin T."/>
            <person name="Nikolski M."/>
            <person name="Rolland T."/>
            <person name="Seret M.-L."/>
            <person name="Casaregola S."/>
            <person name="Despons L."/>
            <person name="Fairhead C."/>
            <person name="Fischer G."/>
            <person name="Lafontaine I."/>
            <person name="Leh V."/>
            <person name="Lemaire M."/>
            <person name="de Montigny J."/>
            <person name="Neuveglise C."/>
            <person name="Thierry A."/>
            <person name="Blanc-Lenfle I."/>
            <person name="Bleykasten C."/>
            <person name="Diffels J."/>
            <person name="Fritsch E."/>
            <person name="Frangeul L."/>
            <person name="Goeffon A."/>
            <person name="Jauniaux N."/>
            <person name="Kachouri-Lafond R."/>
            <person name="Payen C."/>
            <person name="Potier S."/>
            <person name="Pribylova L."/>
            <person name="Ozanne C."/>
            <person name="Richard G.-F."/>
            <person name="Sacerdot C."/>
            <person name="Straub M.-L."/>
            <person name="Talla E."/>
        </authorList>
    </citation>
    <scope>NUCLEOTIDE SEQUENCE [LARGE SCALE GENOMIC DNA]</scope>
    <source>
        <strain>ATCC 2623 / CBS 732 / BCRC 21506 / NBRC 1130 / NCYC 568 / NRRL Y-229</strain>
    </source>
</reference>
<gene>
    <name type="primary">GEP3</name>
    <name type="synonym">FMP48</name>
    <name type="ordered locus">ZYRO0F11000g</name>
</gene>
<feature type="transit peptide" description="Mitochondrion" evidence="2">
    <location>
        <begin position="1"/>
        <end status="unknown"/>
    </location>
</feature>
<feature type="chain" id="PRO_0000409649" description="Genetic interactor of prohibitins 3, mitochondrial">
    <location>
        <begin status="unknown"/>
        <end position="565"/>
    </location>
</feature>
<feature type="domain" description="CP-type G" evidence="3">
    <location>
        <begin position="129"/>
        <end position="315"/>
    </location>
</feature>
<name>GEP3_ZYGRC</name>
<keyword id="KW-0496">Mitochondrion</keyword>
<keyword id="KW-1185">Reference proteome</keyword>
<keyword id="KW-0809">Transit peptide</keyword>
<protein>
    <recommendedName>
        <fullName>Genetic interactor of prohibitins 3, mitochondrial</fullName>
    </recommendedName>
    <alternativeName>
        <fullName>Found in mitochondrial proteome protein 38</fullName>
    </alternativeName>
</protein>
<organism>
    <name type="scientific">Zygosaccharomyces rouxii (strain ATCC 2623 / CBS 732 / NBRC 1130 / NCYC 568 / NRRL Y-229)</name>
    <dbReference type="NCBI Taxonomy" id="559307"/>
    <lineage>
        <taxon>Eukaryota</taxon>
        <taxon>Fungi</taxon>
        <taxon>Dikarya</taxon>
        <taxon>Ascomycota</taxon>
        <taxon>Saccharomycotina</taxon>
        <taxon>Saccharomycetes</taxon>
        <taxon>Saccharomycetales</taxon>
        <taxon>Saccharomycetaceae</taxon>
        <taxon>Zygosaccharomyces</taxon>
    </lineage>
</organism>
<comment type="function">
    <text evidence="1">May be involved in the mitochondrial lipid metabolism.</text>
</comment>
<comment type="subcellular location">
    <subcellularLocation>
        <location evidence="1">Mitochondrion</location>
    </subcellularLocation>
</comment>
<comment type="similarity">
    <text evidence="3">Belongs to the TRAFAC class YlqF/YawG GTPase family. GEP3 subfamily.</text>
</comment>